<organism>
    <name type="scientific">Aromatoleum aromaticum (strain DSM 19018 / LMG 30748 / EbN1)</name>
    <name type="common">Azoarcus sp. (strain EbN1)</name>
    <dbReference type="NCBI Taxonomy" id="76114"/>
    <lineage>
        <taxon>Bacteria</taxon>
        <taxon>Pseudomonadati</taxon>
        <taxon>Pseudomonadota</taxon>
        <taxon>Betaproteobacteria</taxon>
        <taxon>Rhodocyclales</taxon>
        <taxon>Rhodocyclaceae</taxon>
        <taxon>Aromatoleum</taxon>
    </lineage>
</organism>
<name>YCIB_AROAE</name>
<comment type="function">
    <text evidence="1">Plays a role in cell envelope biogenesis, maintenance of cell envelope integrity and membrane homeostasis.</text>
</comment>
<comment type="subcellular location">
    <subcellularLocation>
        <location evidence="1">Cell inner membrane</location>
        <topology evidence="1">Multi-pass membrane protein</topology>
    </subcellularLocation>
</comment>
<comment type="similarity">
    <text evidence="1">Belongs to the YciB family.</text>
</comment>
<accession>Q5NYM6</accession>
<dbReference type="EMBL" id="CR555306">
    <property type="protein sequence ID" value="CAI09838.1"/>
    <property type="molecule type" value="Genomic_DNA"/>
</dbReference>
<dbReference type="RefSeq" id="WP_011239491.1">
    <property type="nucleotide sequence ID" value="NC_006513.1"/>
</dbReference>
<dbReference type="STRING" id="76114.ebA6501"/>
<dbReference type="KEGG" id="eba:ebA6501"/>
<dbReference type="eggNOG" id="COG2917">
    <property type="taxonomic scope" value="Bacteria"/>
</dbReference>
<dbReference type="HOGENOM" id="CLU_089554_2_0_4"/>
<dbReference type="OrthoDB" id="9788219at2"/>
<dbReference type="Proteomes" id="UP000006552">
    <property type="component" value="Chromosome"/>
</dbReference>
<dbReference type="GO" id="GO:0005886">
    <property type="term" value="C:plasma membrane"/>
    <property type="evidence" value="ECO:0007669"/>
    <property type="project" value="UniProtKB-SubCell"/>
</dbReference>
<dbReference type="HAMAP" id="MF_00189">
    <property type="entry name" value="YciB"/>
    <property type="match status" value="1"/>
</dbReference>
<dbReference type="InterPro" id="IPR006008">
    <property type="entry name" value="YciB"/>
</dbReference>
<dbReference type="NCBIfam" id="TIGR00997">
    <property type="entry name" value="ispZ"/>
    <property type="match status" value="1"/>
</dbReference>
<dbReference type="NCBIfam" id="NF001325">
    <property type="entry name" value="PRK00259.1-3"/>
    <property type="match status" value="1"/>
</dbReference>
<dbReference type="PANTHER" id="PTHR36917:SF1">
    <property type="entry name" value="INNER MEMBRANE-SPANNING PROTEIN YCIB"/>
    <property type="match status" value="1"/>
</dbReference>
<dbReference type="PANTHER" id="PTHR36917">
    <property type="entry name" value="INTRACELLULAR SEPTATION PROTEIN A-RELATED"/>
    <property type="match status" value="1"/>
</dbReference>
<dbReference type="Pfam" id="PF04279">
    <property type="entry name" value="IspA"/>
    <property type="match status" value="1"/>
</dbReference>
<evidence type="ECO:0000255" key="1">
    <source>
        <dbReference type="HAMAP-Rule" id="MF_00189"/>
    </source>
</evidence>
<proteinExistence type="inferred from homology"/>
<keyword id="KW-0997">Cell inner membrane</keyword>
<keyword id="KW-1003">Cell membrane</keyword>
<keyword id="KW-0472">Membrane</keyword>
<keyword id="KW-1185">Reference proteome</keyword>
<keyword id="KW-0812">Transmembrane</keyword>
<keyword id="KW-1133">Transmembrane helix</keyword>
<gene>
    <name evidence="1" type="primary">yciB</name>
    <name type="ordered locus">AZOSEA37130</name>
    <name type="ORF">ebA6501</name>
</gene>
<sequence>MKILFDLLPVILFFVAYKIAGGNQAFAHELASRWLGDGIAVTQAPILLATAVAILATIAQIGWVWMRHRKVDTMLWISLAIIAVFGGATLFFHNPTFIKWKPTALYWLFGGTLTVSAVIFRRNLIRKMLEAQIRLPEPVWKRLNLAWAGFFILMGFLNLYVAYNFSEEAWVNFKLFGGMGLMLLFVLGQGFYLSRHIQEETT</sequence>
<reference key="1">
    <citation type="journal article" date="2005" name="Arch. Microbiol.">
        <title>The genome sequence of an anaerobic aromatic-degrading denitrifying bacterium, strain EbN1.</title>
        <authorList>
            <person name="Rabus R."/>
            <person name="Kube M."/>
            <person name="Heider J."/>
            <person name="Beck A."/>
            <person name="Heitmann K."/>
            <person name="Widdel F."/>
            <person name="Reinhardt R."/>
        </authorList>
    </citation>
    <scope>NUCLEOTIDE SEQUENCE [LARGE SCALE GENOMIC DNA]</scope>
    <source>
        <strain>DSM 19018 / LMG 30748 / EbN1</strain>
    </source>
</reference>
<protein>
    <recommendedName>
        <fullName evidence="1">Inner membrane-spanning protein YciB</fullName>
    </recommendedName>
</protein>
<feature type="chain" id="PRO_1000020983" description="Inner membrane-spanning protein YciB">
    <location>
        <begin position="1"/>
        <end position="202"/>
    </location>
</feature>
<feature type="transmembrane region" description="Helical" evidence="1">
    <location>
        <begin position="3"/>
        <end position="23"/>
    </location>
</feature>
<feature type="transmembrane region" description="Helical" evidence="1">
    <location>
        <begin position="46"/>
        <end position="66"/>
    </location>
</feature>
<feature type="transmembrane region" description="Helical" evidence="1">
    <location>
        <begin position="73"/>
        <end position="93"/>
    </location>
</feature>
<feature type="transmembrane region" description="Helical" evidence="1">
    <location>
        <begin position="100"/>
        <end position="120"/>
    </location>
</feature>
<feature type="transmembrane region" description="Helical" evidence="1">
    <location>
        <begin position="145"/>
        <end position="165"/>
    </location>
</feature>
<feature type="transmembrane region" description="Helical" evidence="1">
    <location>
        <begin position="173"/>
        <end position="193"/>
    </location>
</feature>